<organism>
    <name type="scientific">Parvibaculum lavamentivorans (strain DS-1 / DSM 13023 / NCIMB 13966)</name>
    <dbReference type="NCBI Taxonomy" id="402881"/>
    <lineage>
        <taxon>Bacteria</taxon>
        <taxon>Pseudomonadati</taxon>
        <taxon>Pseudomonadota</taxon>
        <taxon>Alphaproteobacteria</taxon>
        <taxon>Hyphomicrobiales</taxon>
        <taxon>Parvibaculaceae</taxon>
        <taxon>Parvibaculum</taxon>
    </lineage>
</organism>
<gene>
    <name evidence="1" type="primary">rplT</name>
    <name type="ordered locus">Plav_0219</name>
</gene>
<reference key="1">
    <citation type="journal article" date="2011" name="Stand. Genomic Sci.">
        <title>Complete genome sequence of Parvibaculum lavamentivorans type strain (DS-1(T)).</title>
        <authorList>
            <person name="Schleheck D."/>
            <person name="Weiss M."/>
            <person name="Pitluck S."/>
            <person name="Bruce D."/>
            <person name="Land M.L."/>
            <person name="Han S."/>
            <person name="Saunders E."/>
            <person name="Tapia R."/>
            <person name="Detter C."/>
            <person name="Brettin T."/>
            <person name="Han J."/>
            <person name="Woyke T."/>
            <person name="Goodwin L."/>
            <person name="Pennacchio L."/>
            <person name="Nolan M."/>
            <person name="Cook A.M."/>
            <person name="Kjelleberg S."/>
            <person name="Thomas T."/>
        </authorList>
    </citation>
    <scope>NUCLEOTIDE SEQUENCE [LARGE SCALE GENOMIC DNA]</scope>
    <source>
        <strain>DS-1 / DSM 13023 / NCIMB 13966</strain>
    </source>
</reference>
<keyword id="KW-1185">Reference proteome</keyword>
<keyword id="KW-0687">Ribonucleoprotein</keyword>
<keyword id="KW-0689">Ribosomal protein</keyword>
<keyword id="KW-0694">RNA-binding</keyword>
<keyword id="KW-0699">rRNA-binding</keyword>
<protein>
    <recommendedName>
        <fullName evidence="1">Large ribosomal subunit protein bL20</fullName>
    </recommendedName>
    <alternativeName>
        <fullName evidence="2">50S ribosomal protein L20</fullName>
    </alternativeName>
</protein>
<comment type="function">
    <text evidence="1">Binds directly to 23S ribosomal RNA and is necessary for the in vitro assembly process of the 50S ribosomal subunit. It is not involved in the protein synthesizing functions of that subunit.</text>
</comment>
<comment type="similarity">
    <text evidence="1">Belongs to the bacterial ribosomal protein bL20 family.</text>
</comment>
<name>RL20_PARL1</name>
<feature type="chain" id="PRO_1000072184" description="Large ribosomal subunit protein bL20">
    <location>
        <begin position="1"/>
        <end position="118"/>
    </location>
</feature>
<proteinExistence type="inferred from homology"/>
<evidence type="ECO:0000255" key="1">
    <source>
        <dbReference type="HAMAP-Rule" id="MF_00382"/>
    </source>
</evidence>
<evidence type="ECO:0000305" key="2"/>
<accession>A7HPK9</accession>
<sequence length="118" mass="13591">MSRVKRGVTAHARHRKIIKKAKGYYGRRKNAFRTANQAVEKAGQYAYRDRRTRKRNFRALWIQRINAGVREHGLTYSRFIDGLAKAGIEVDRKVLSDIAIHEPEAFKALVEQAQAALK</sequence>
<dbReference type="EMBL" id="CP000774">
    <property type="protein sequence ID" value="ABS61842.1"/>
    <property type="molecule type" value="Genomic_DNA"/>
</dbReference>
<dbReference type="RefSeq" id="WP_011995133.1">
    <property type="nucleotide sequence ID" value="NC_009719.1"/>
</dbReference>
<dbReference type="SMR" id="A7HPK9"/>
<dbReference type="STRING" id="402881.Plav_0219"/>
<dbReference type="KEGG" id="pla:Plav_0219"/>
<dbReference type="eggNOG" id="COG0292">
    <property type="taxonomic scope" value="Bacteria"/>
</dbReference>
<dbReference type="HOGENOM" id="CLU_123265_0_1_5"/>
<dbReference type="OrthoDB" id="9808966at2"/>
<dbReference type="Proteomes" id="UP000006377">
    <property type="component" value="Chromosome"/>
</dbReference>
<dbReference type="GO" id="GO:1990904">
    <property type="term" value="C:ribonucleoprotein complex"/>
    <property type="evidence" value="ECO:0007669"/>
    <property type="project" value="UniProtKB-KW"/>
</dbReference>
<dbReference type="GO" id="GO:0005840">
    <property type="term" value="C:ribosome"/>
    <property type="evidence" value="ECO:0007669"/>
    <property type="project" value="UniProtKB-KW"/>
</dbReference>
<dbReference type="GO" id="GO:0019843">
    <property type="term" value="F:rRNA binding"/>
    <property type="evidence" value="ECO:0007669"/>
    <property type="project" value="UniProtKB-UniRule"/>
</dbReference>
<dbReference type="GO" id="GO:0003735">
    <property type="term" value="F:structural constituent of ribosome"/>
    <property type="evidence" value="ECO:0007669"/>
    <property type="project" value="InterPro"/>
</dbReference>
<dbReference type="GO" id="GO:0000027">
    <property type="term" value="P:ribosomal large subunit assembly"/>
    <property type="evidence" value="ECO:0007669"/>
    <property type="project" value="UniProtKB-UniRule"/>
</dbReference>
<dbReference type="GO" id="GO:0006412">
    <property type="term" value="P:translation"/>
    <property type="evidence" value="ECO:0007669"/>
    <property type="project" value="InterPro"/>
</dbReference>
<dbReference type="CDD" id="cd07026">
    <property type="entry name" value="Ribosomal_L20"/>
    <property type="match status" value="1"/>
</dbReference>
<dbReference type="FunFam" id="1.10.1900.20:FF:000001">
    <property type="entry name" value="50S ribosomal protein L20"/>
    <property type="match status" value="1"/>
</dbReference>
<dbReference type="Gene3D" id="6.10.160.10">
    <property type="match status" value="1"/>
</dbReference>
<dbReference type="Gene3D" id="1.10.1900.20">
    <property type="entry name" value="Ribosomal protein L20"/>
    <property type="match status" value="1"/>
</dbReference>
<dbReference type="HAMAP" id="MF_00382">
    <property type="entry name" value="Ribosomal_bL20"/>
    <property type="match status" value="1"/>
</dbReference>
<dbReference type="InterPro" id="IPR005813">
    <property type="entry name" value="Ribosomal_bL20"/>
</dbReference>
<dbReference type="InterPro" id="IPR049946">
    <property type="entry name" value="RIBOSOMAL_L20_CS"/>
</dbReference>
<dbReference type="InterPro" id="IPR035566">
    <property type="entry name" value="Ribosomal_protein_bL20_C"/>
</dbReference>
<dbReference type="NCBIfam" id="TIGR01032">
    <property type="entry name" value="rplT_bact"/>
    <property type="match status" value="1"/>
</dbReference>
<dbReference type="PANTHER" id="PTHR10986">
    <property type="entry name" value="39S RIBOSOMAL PROTEIN L20"/>
    <property type="match status" value="1"/>
</dbReference>
<dbReference type="Pfam" id="PF00453">
    <property type="entry name" value="Ribosomal_L20"/>
    <property type="match status" value="1"/>
</dbReference>
<dbReference type="PRINTS" id="PR00062">
    <property type="entry name" value="RIBOSOMALL20"/>
</dbReference>
<dbReference type="SUPFAM" id="SSF74731">
    <property type="entry name" value="Ribosomal protein L20"/>
    <property type="match status" value="1"/>
</dbReference>
<dbReference type="PROSITE" id="PS00937">
    <property type="entry name" value="RIBOSOMAL_L20"/>
    <property type="match status" value="1"/>
</dbReference>